<organism>
    <name type="scientific">Solidesulfovibrio magneticus (strain ATCC 700980 / DSM 13731 / RS-1)</name>
    <name type="common">Desulfovibrio magneticus</name>
    <dbReference type="NCBI Taxonomy" id="573370"/>
    <lineage>
        <taxon>Bacteria</taxon>
        <taxon>Pseudomonadati</taxon>
        <taxon>Thermodesulfobacteriota</taxon>
        <taxon>Desulfovibrionia</taxon>
        <taxon>Desulfovibrionales</taxon>
        <taxon>Desulfovibrionaceae</taxon>
        <taxon>Solidesulfovibrio</taxon>
    </lineage>
</organism>
<keyword id="KW-0021">Allosteric enzyme</keyword>
<keyword id="KW-0963">Cytoplasm</keyword>
<keyword id="KW-0378">Hydrolase</keyword>
<keyword id="KW-0479">Metal-binding</keyword>
<keyword id="KW-0645">Protease</keyword>
<keyword id="KW-0915">Sodium</keyword>
<keyword id="KW-0888">Threonine protease</keyword>
<dbReference type="EC" id="3.4.25.2" evidence="1"/>
<dbReference type="EMBL" id="AP010904">
    <property type="protein sequence ID" value="BAH77328.1"/>
    <property type="molecule type" value="Genomic_DNA"/>
</dbReference>
<dbReference type="RefSeq" id="WP_015862468.1">
    <property type="nucleotide sequence ID" value="NC_012796.1"/>
</dbReference>
<dbReference type="SMR" id="C4XN25"/>
<dbReference type="STRING" id="573370.DMR_38370"/>
<dbReference type="MEROPS" id="T01.007"/>
<dbReference type="KEGG" id="dma:DMR_38370"/>
<dbReference type="eggNOG" id="COG5405">
    <property type="taxonomic scope" value="Bacteria"/>
</dbReference>
<dbReference type="HOGENOM" id="CLU_093872_1_0_7"/>
<dbReference type="OrthoDB" id="9804884at2"/>
<dbReference type="Proteomes" id="UP000009071">
    <property type="component" value="Chromosome"/>
</dbReference>
<dbReference type="GO" id="GO:0009376">
    <property type="term" value="C:HslUV protease complex"/>
    <property type="evidence" value="ECO:0007669"/>
    <property type="project" value="UniProtKB-UniRule"/>
</dbReference>
<dbReference type="GO" id="GO:0005839">
    <property type="term" value="C:proteasome core complex"/>
    <property type="evidence" value="ECO:0007669"/>
    <property type="project" value="InterPro"/>
</dbReference>
<dbReference type="GO" id="GO:0046872">
    <property type="term" value="F:metal ion binding"/>
    <property type="evidence" value="ECO:0007669"/>
    <property type="project" value="UniProtKB-KW"/>
</dbReference>
<dbReference type="GO" id="GO:0004298">
    <property type="term" value="F:threonine-type endopeptidase activity"/>
    <property type="evidence" value="ECO:0007669"/>
    <property type="project" value="UniProtKB-KW"/>
</dbReference>
<dbReference type="GO" id="GO:0051603">
    <property type="term" value="P:proteolysis involved in protein catabolic process"/>
    <property type="evidence" value="ECO:0007669"/>
    <property type="project" value="InterPro"/>
</dbReference>
<dbReference type="CDD" id="cd01913">
    <property type="entry name" value="protease_HslV"/>
    <property type="match status" value="1"/>
</dbReference>
<dbReference type="Gene3D" id="3.60.20.10">
    <property type="entry name" value="Glutamine Phosphoribosylpyrophosphate, subunit 1, domain 1"/>
    <property type="match status" value="1"/>
</dbReference>
<dbReference type="HAMAP" id="MF_00248">
    <property type="entry name" value="HslV"/>
    <property type="match status" value="1"/>
</dbReference>
<dbReference type="InterPro" id="IPR022281">
    <property type="entry name" value="ATP-dep_Prtase_HsIV_su"/>
</dbReference>
<dbReference type="InterPro" id="IPR029055">
    <property type="entry name" value="Ntn_hydrolases_N"/>
</dbReference>
<dbReference type="InterPro" id="IPR001353">
    <property type="entry name" value="Proteasome_sua/b"/>
</dbReference>
<dbReference type="InterPro" id="IPR023333">
    <property type="entry name" value="Proteasome_suB-type"/>
</dbReference>
<dbReference type="NCBIfam" id="TIGR03692">
    <property type="entry name" value="ATP_dep_HslV"/>
    <property type="match status" value="1"/>
</dbReference>
<dbReference type="NCBIfam" id="NF003964">
    <property type="entry name" value="PRK05456.1"/>
    <property type="match status" value="1"/>
</dbReference>
<dbReference type="PANTHER" id="PTHR32194:SF0">
    <property type="entry name" value="ATP-DEPENDENT PROTEASE SUBUNIT HSLV"/>
    <property type="match status" value="1"/>
</dbReference>
<dbReference type="PANTHER" id="PTHR32194">
    <property type="entry name" value="METALLOPROTEASE TLDD"/>
    <property type="match status" value="1"/>
</dbReference>
<dbReference type="Pfam" id="PF00227">
    <property type="entry name" value="Proteasome"/>
    <property type="match status" value="1"/>
</dbReference>
<dbReference type="PIRSF" id="PIRSF039093">
    <property type="entry name" value="HslV"/>
    <property type="match status" value="1"/>
</dbReference>
<dbReference type="SUPFAM" id="SSF56235">
    <property type="entry name" value="N-terminal nucleophile aminohydrolases (Ntn hydrolases)"/>
    <property type="match status" value="1"/>
</dbReference>
<dbReference type="PROSITE" id="PS51476">
    <property type="entry name" value="PROTEASOME_BETA_2"/>
    <property type="match status" value="1"/>
</dbReference>
<protein>
    <recommendedName>
        <fullName evidence="1">ATP-dependent protease subunit HslV</fullName>
        <ecNumber evidence="1">3.4.25.2</ecNumber>
    </recommendedName>
</protein>
<reference key="1">
    <citation type="journal article" date="2009" name="Genome Res.">
        <title>Whole genome sequence of Desulfovibrio magneticus strain RS-1 revealed common gene clusters in magnetotactic bacteria.</title>
        <authorList>
            <person name="Nakazawa H."/>
            <person name="Arakaki A."/>
            <person name="Narita-Yamada S."/>
            <person name="Yashiro I."/>
            <person name="Jinno K."/>
            <person name="Aoki N."/>
            <person name="Tsuruyama A."/>
            <person name="Okamura Y."/>
            <person name="Tanikawa S."/>
            <person name="Fujita N."/>
            <person name="Takeyama H."/>
            <person name="Matsunaga T."/>
        </authorList>
    </citation>
    <scope>NUCLEOTIDE SEQUENCE [LARGE SCALE GENOMIC DNA]</scope>
    <source>
        <strain>ATCC 700980 / DSM 13731 / RS-1</strain>
    </source>
</reference>
<proteinExistence type="inferred from homology"/>
<name>HSLV_SOLM1</name>
<evidence type="ECO:0000255" key="1">
    <source>
        <dbReference type="HAMAP-Rule" id="MF_00248"/>
    </source>
</evidence>
<gene>
    <name evidence="1" type="primary">hslV</name>
    <name type="ordered locus">DMR_38370</name>
</gene>
<comment type="function">
    <text evidence="1">Protease subunit of a proteasome-like degradation complex believed to be a general protein degrading machinery.</text>
</comment>
<comment type="catalytic activity">
    <reaction evidence="1">
        <text>ATP-dependent cleavage of peptide bonds with broad specificity.</text>
        <dbReference type="EC" id="3.4.25.2"/>
    </reaction>
</comment>
<comment type="activity regulation">
    <text evidence="1">Allosterically activated by HslU binding.</text>
</comment>
<comment type="subunit">
    <text evidence="1">A double ring-shaped homohexamer of HslV is capped on each side by a ring-shaped HslU homohexamer. The assembly of the HslU/HslV complex is dependent on binding of ATP.</text>
</comment>
<comment type="subcellular location">
    <subcellularLocation>
        <location evidence="1">Cytoplasm</location>
    </subcellularLocation>
</comment>
<comment type="similarity">
    <text evidence="1">Belongs to the peptidase T1B family. HslV subfamily.</text>
</comment>
<accession>C4XN25</accession>
<sequence length="181" mass="19403">MQLRGTTIVAVRTEAGVAVAGDGQVTLGQAIAVKHTARKVRRMYKDKVVIGFAGATADAFTLFERFEAKLEEFGGNLVRASVELAKDWRKDKYLRRLEAMMIVADAGNVLILSGTGDVIEPDDGVAAIGSGGPYAMAAARALLRNTELSAREIVEKSMAIAAEMCVYTNDQLVVETLEKPA</sequence>
<feature type="chain" id="PRO_1000204503" description="ATP-dependent protease subunit HslV">
    <location>
        <begin position="1"/>
        <end position="181"/>
    </location>
</feature>
<feature type="active site" evidence="1">
    <location>
        <position position="6"/>
    </location>
</feature>
<feature type="binding site" evidence="1">
    <location>
        <position position="162"/>
    </location>
    <ligand>
        <name>Na(+)</name>
        <dbReference type="ChEBI" id="CHEBI:29101"/>
    </ligand>
</feature>
<feature type="binding site" evidence="1">
    <location>
        <position position="165"/>
    </location>
    <ligand>
        <name>Na(+)</name>
        <dbReference type="ChEBI" id="CHEBI:29101"/>
    </ligand>
</feature>
<feature type="binding site" evidence="1">
    <location>
        <position position="168"/>
    </location>
    <ligand>
        <name>Na(+)</name>
        <dbReference type="ChEBI" id="CHEBI:29101"/>
    </ligand>
</feature>